<sequence>MKKPEKITSRTANFAKWYVDVITQADLMNYGPIKGTIYFKPLGYKIWENIVKIVNAYFVKQKIENVYFPLLIPQDFIEKEKKHIEGFAPELLTITKVGGKNLVENIYIRPTSELLFADYFKAEIAKNNILPIKLNQWSQVLRWEKTTNPFLRNTEFLWQEGHTIHASKVEADQFAKKIARFYKYFLENYLAIPVISGQKTEREKFAGAVNTYTVEAMMQNFRALQSATAHFLGQNFAKNFEIFYKNKENKSQIPFQTSWGLSTRLIGAIVMVHSDDNGLIFPPKIAPIQVDILEFFSKKNQEVKIFAKKIAKILKNAKISYKIDDTDQQIGYKINNSEVHGAPIRIEIGPNEVKNNQICLVRRDNHQKFFFNIDLLKEKCRKILEQIQADLFKKAKIRLLENTVFVNSINEFEQAIKNNKFVIAPFSESPEREQEIQEKTGATARCILPKNSFFALPQTGNSIFSGEKTNKFVLFAKSY</sequence>
<reference key="1">
    <citation type="journal article" date="2005" name="J. Bacteriol.">
        <title>Swine and poultry pathogens: the complete genome sequences of two strains of Mycoplasma hyopneumoniae and a strain of Mycoplasma synoviae.</title>
        <authorList>
            <person name="Vasconcelos A.T.R."/>
            <person name="Ferreira H.B."/>
            <person name="Bizarro C.V."/>
            <person name="Bonatto S.L."/>
            <person name="Carvalho M.O."/>
            <person name="Pinto P.M."/>
            <person name="Almeida D.F."/>
            <person name="Almeida L.G.P."/>
            <person name="Almeida R."/>
            <person name="Alves-Junior L."/>
            <person name="Assuncao E.N."/>
            <person name="Azevedo V.A.C."/>
            <person name="Bogo M.R."/>
            <person name="Brigido M.M."/>
            <person name="Brocchi M."/>
            <person name="Burity H.A."/>
            <person name="Camargo A.A."/>
            <person name="Camargo S.S."/>
            <person name="Carepo M.S."/>
            <person name="Carraro D.M."/>
            <person name="de Mattos Cascardo J.C."/>
            <person name="Castro L.A."/>
            <person name="Cavalcanti G."/>
            <person name="Chemale G."/>
            <person name="Collevatti R.G."/>
            <person name="Cunha C.W."/>
            <person name="Dallagiovanna B."/>
            <person name="Dambros B.P."/>
            <person name="Dellagostin O.A."/>
            <person name="Falcao C."/>
            <person name="Fantinatti-Garboggini F."/>
            <person name="Felipe M.S.S."/>
            <person name="Fiorentin L."/>
            <person name="Franco G.R."/>
            <person name="Freitas N.S.A."/>
            <person name="Frias D."/>
            <person name="Grangeiro T.B."/>
            <person name="Grisard E.C."/>
            <person name="Guimaraes C.T."/>
            <person name="Hungria M."/>
            <person name="Jardim S.N."/>
            <person name="Krieger M.A."/>
            <person name="Laurino J.P."/>
            <person name="Lima L.F.A."/>
            <person name="Lopes M.I."/>
            <person name="Loreto E.L.S."/>
            <person name="Madeira H.M.F."/>
            <person name="Manfio G.P."/>
            <person name="Maranhao A.Q."/>
            <person name="Martinkovics C.T."/>
            <person name="Medeiros S.R.B."/>
            <person name="Moreira M.A.M."/>
            <person name="Neiva M."/>
            <person name="Ramalho-Neto C.E."/>
            <person name="Nicolas M.F."/>
            <person name="Oliveira S.C."/>
            <person name="Paixao R.F.C."/>
            <person name="Pedrosa F.O."/>
            <person name="Pena S.D.J."/>
            <person name="Pereira M."/>
            <person name="Pereira-Ferrari L."/>
            <person name="Piffer I."/>
            <person name="Pinto L.S."/>
            <person name="Potrich D.P."/>
            <person name="Salim A.C.M."/>
            <person name="Santos F.R."/>
            <person name="Schmitt R."/>
            <person name="Schneider M.P.C."/>
            <person name="Schrank A."/>
            <person name="Schrank I.S."/>
            <person name="Schuck A.F."/>
            <person name="Seuanez H.N."/>
            <person name="Silva D.W."/>
            <person name="Silva R."/>
            <person name="Silva S.C."/>
            <person name="Soares C.M.A."/>
            <person name="Souza K.R.L."/>
            <person name="Souza R.C."/>
            <person name="Staats C.C."/>
            <person name="Steffens M.B.R."/>
            <person name="Teixeira S.M.R."/>
            <person name="Urmenyi T.P."/>
            <person name="Vainstein M.H."/>
            <person name="Zuccherato L.W."/>
            <person name="Simpson A.J.G."/>
            <person name="Zaha A."/>
        </authorList>
    </citation>
    <scope>NUCLEOTIDE SEQUENCE [LARGE SCALE GENOMIC DNA]</scope>
    <source>
        <strain>J / ATCC 25934 / NCTC 10110</strain>
    </source>
</reference>
<gene>
    <name evidence="1" type="primary">proS</name>
    <name type="ordered locus">MHJ_0381</name>
</gene>
<keyword id="KW-0030">Aminoacyl-tRNA synthetase</keyword>
<keyword id="KW-0067">ATP-binding</keyword>
<keyword id="KW-0963">Cytoplasm</keyword>
<keyword id="KW-0436">Ligase</keyword>
<keyword id="KW-0547">Nucleotide-binding</keyword>
<keyword id="KW-0648">Protein biosynthesis</keyword>
<organism>
    <name type="scientific">Mesomycoplasma hyopneumoniae (strain J / ATCC 25934 / NCTC 10110)</name>
    <name type="common">Mycoplasma hyopneumoniae</name>
    <dbReference type="NCBI Taxonomy" id="262719"/>
    <lineage>
        <taxon>Bacteria</taxon>
        <taxon>Bacillati</taxon>
        <taxon>Mycoplasmatota</taxon>
        <taxon>Mycoplasmoidales</taxon>
        <taxon>Metamycoplasmataceae</taxon>
        <taxon>Mesomycoplasma</taxon>
    </lineage>
</organism>
<accession>Q4A9V2</accession>
<name>SYP_MESHJ</name>
<comment type="function">
    <text evidence="1">Catalyzes the attachment of proline to tRNA(Pro) in a two-step reaction: proline is first activated by ATP to form Pro-AMP and then transferred to the acceptor end of tRNA(Pro).</text>
</comment>
<comment type="catalytic activity">
    <reaction evidence="1">
        <text>tRNA(Pro) + L-proline + ATP = L-prolyl-tRNA(Pro) + AMP + diphosphate</text>
        <dbReference type="Rhea" id="RHEA:14305"/>
        <dbReference type="Rhea" id="RHEA-COMP:9700"/>
        <dbReference type="Rhea" id="RHEA-COMP:9702"/>
        <dbReference type="ChEBI" id="CHEBI:30616"/>
        <dbReference type="ChEBI" id="CHEBI:33019"/>
        <dbReference type="ChEBI" id="CHEBI:60039"/>
        <dbReference type="ChEBI" id="CHEBI:78442"/>
        <dbReference type="ChEBI" id="CHEBI:78532"/>
        <dbReference type="ChEBI" id="CHEBI:456215"/>
        <dbReference type="EC" id="6.1.1.15"/>
    </reaction>
</comment>
<comment type="subunit">
    <text evidence="1">Homodimer.</text>
</comment>
<comment type="subcellular location">
    <subcellularLocation>
        <location evidence="1">Cytoplasm</location>
    </subcellularLocation>
</comment>
<comment type="domain">
    <text evidence="1">Consists of three domains: the N-terminal catalytic domain, the anticodon-binding domain and the C-terminal extension.</text>
</comment>
<comment type="similarity">
    <text evidence="1">Belongs to the class-II aminoacyl-tRNA synthetase family. ProS type 3 subfamily.</text>
</comment>
<feature type="chain" id="PRO_0000249136" description="Proline--tRNA ligase">
    <location>
        <begin position="1"/>
        <end position="479"/>
    </location>
</feature>
<evidence type="ECO:0000255" key="1">
    <source>
        <dbReference type="HAMAP-Rule" id="MF_01571"/>
    </source>
</evidence>
<dbReference type="EC" id="6.1.1.15" evidence="1"/>
<dbReference type="EMBL" id="AE017243">
    <property type="protein sequence ID" value="AAZ44469.1"/>
    <property type="molecule type" value="Genomic_DNA"/>
</dbReference>
<dbReference type="RefSeq" id="WP_011284150.1">
    <property type="nucleotide sequence ID" value="NC_007295.1"/>
</dbReference>
<dbReference type="SMR" id="Q4A9V2"/>
<dbReference type="GeneID" id="41334691"/>
<dbReference type="KEGG" id="mhj:MHJ_0381"/>
<dbReference type="eggNOG" id="COG0441">
    <property type="taxonomic scope" value="Bacteria"/>
</dbReference>
<dbReference type="HOGENOM" id="CLU_001882_4_2_14"/>
<dbReference type="OrthoDB" id="9809052at2"/>
<dbReference type="Proteomes" id="UP000000548">
    <property type="component" value="Chromosome"/>
</dbReference>
<dbReference type="GO" id="GO:0017101">
    <property type="term" value="C:aminoacyl-tRNA synthetase multienzyme complex"/>
    <property type="evidence" value="ECO:0007669"/>
    <property type="project" value="TreeGrafter"/>
</dbReference>
<dbReference type="GO" id="GO:0005737">
    <property type="term" value="C:cytoplasm"/>
    <property type="evidence" value="ECO:0007669"/>
    <property type="project" value="UniProtKB-SubCell"/>
</dbReference>
<dbReference type="GO" id="GO:0005524">
    <property type="term" value="F:ATP binding"/>
    <property type="evidence" value="ECO:0007669"/>
    <property type="project" value="UniProtKB-UniRule"/>
</dbReference>
<dbReference type="GO" id="GO:0004827">
    <property type="term" value="F:proline-tRNA ligase activity"/>
    <property type="evidence" value="ECO:0007669"/>
    <property type="project" value="UniProtKB-UniRule"/>
</dbReference>
<dbReference type="GO" id="GO:0006433">
    <property type="term" value="P:prolyl-tRNA aminoacylation"/>
    <property type="evidence" value="ECO:0007669"/>
    <property type="project" value="UniProtKB-UniRule"/>
</dbReference>
<dbReference type="CDD" id="cd00778">
    <property type="entry name" value="ProRS_core_arch_euk"/>
    <property type="match status" value="1"/>
</dbReference>
<dbReference type="Gene3D" id="3.40.50.800">
    <property type="entry name" value="Anticodon-binding domain"/>
    <property type="match status" value="1"/>
</dbReference>
<dbReference type="Gene3D" id="3.30.930.10">
    <property type="entry name" value="Bira Bifunctional Protein, Domain 2"/>
    <property type="match status" value="1"/>
</dbReference>
<dbReference type="Gene3D" id="3.30.110.30">
    <property type="entry name" value="C-terminal domain of ProRS"/>
    <property type="match status" value="1"/>
</dbReference>
<dbReference type="HAMAP" id="MF_01571">
    <property type="entry name" value="Pro_tRNA_synth_type3"/>
    <property type="match status" value="1"/>
</dbReference>
<dbReference type="InterPro" id="IPR002314">
    <property type="entry name" value="aa-tRNA-synt_IIb"/>
</dbReference>
<dbReference type="InterPro" id="IPR006195">
    <property type="entry name" value="aa-tRNA-synth_II"/>
</dbReference>
<dbReference type="InterPro" id="IPR045864">
    <property type="entry name" value="aa-tRNA-synth_II/BPL/LPL"/>
</dbReference>
<dbReference type="InterPro" id="IPR004154">
    <property type="entry name" value="Anticodon-bd"/>
</dbReference>
<dbReference type="InterPro" id="IPR036621">
    <property type="entry name" value="Anticodon-bd_dom_sf"/>
</dbReference>
<dbReference type="InterPro" id="IPR002316">
    <property type="entry name" value="Pro-tRNA-ligase_IIa"/>
</dbReference>
<dbReference type="InterPro" id="IPR004499">
    <property type="entry name" value="Pro-tRNA-ligase_IIa_arc-type"/>
</dbReference>
<dbReference type="InterPro" id="IPR016061">
    <property type="entry name" value="Pro-tRNA_ligase_II_C"/>
</dbReference>
<dbReference type="InterPro" id="IPR017449">
    <property type="entry name" value="Pro-tRNA_synth_II"/>
</dbReference>
<dbReference type="InterPro" id="IPR033721">
    <property type="entry name" value="ProRS_core_arch_euk"/>
</dbReference>
<dbReference type="NCBIfam" id="TIGR00408">
    <property type="entry name" value="proS_fam_I"/>
    <property type="match status" value="1"/>
</dbReference>
<dbReference type="PANTHER" id="PTHR43382:SF2">
    <property type="entry name" value="BIFUNCTIONAL GLUTAMATE_PROLINE--TRNA LIGASE"/>
    <property type="match status" value="1"/>
</dbReference>
<dbReference type="PANTHER" id="PTHR43382">
    <property type="entry name" value="PROLYL-TRNA SYNTHETASE"/>
    <property type="match status" value="1"/>
</dbReference>
<dbReference type="Pfam" id="PF03129">
    <property type="entry name" value="HGTP_anticodon"/>
    <property type="match status" value="1"/>
</dbReference>
<dbReference type="Pfam" id="PF09180">
    <property type="entry name" value="ProRS-C_1"/>
    <property type="match status" value="1"/>
</dbReference>
<dbReference type="Pfam" id="PF00587">
    <property type="entry name" value="tRNA-synt_2b"/>
    <property type="match status" value="1"/>
</dbReference>
<dbReference type="PRINTS" id="PR01046">
    <property type="entry name" value="TRNASYNTHPRO"/>
</dbReference>
<dbReference type="SMART" id="SM00946">
    <property type="entry name" value="ProRS-C_1"/>
    <property type="match status" value="1"/>
</dbReference>
<dbReference type="SUPFAM" id="SSF64586">
    <property type="entry name" value="C-terminal domain of ProRS"/>
    <property type="match status" value="1"/>
</dbReference>
<dbReference type="SUPFAM" id="SSF52954">
    <property type="entry name" value="Class II aaRS ABD-related"/>
    <property type="match status" value="1"/>
</dbReference>
<dbReference type="SUPFAM" id="SSF55681">
    <property type="entry name" value="Class II aaRS and biotin synthetases"/>
    <property type="match status" value="1"/>
</dbReference>
<dbReference type="PROSITE" id="PS50862">
    <property type="entry name" value="AA_TRNA_LIGASE_II"/>
    <property type="match status" value="1"/>
</dbReference>
<proteinExistence type="inferred from homology"/>
<protein>
    <recommendedName>
        <fullName evidence="1">Proline--tRNA ligase</fullName>
        <ecNumber evidence="1">6.1.1.15</ecNumber>
    </recommendedName>
    <alternativeName>
        <fullName evidence="1">Prolyl-tRNA synthetase</fullName>
        <shortName evidence="1">ProRS</shortName>
    </alternativeName>
</protein>